<dbReference type="EMBL" id="AC007127">
    <property type="status" value="NOT_ANNOTATED_CDS"/>
    <property type="molecule type" value="Genomic_DNA"/>
</dbReference>
<dbReference type="EMBL" id="CP002685">
    <property type="protein sequence ID" value="AEC06591.1"/>
    <property type="molecule type" value="Genomic_DNA"/>
</dbReference>
<dbReference type="EMBL" id="CP002685">
    <property type="protein sequence ID" value="AEC06592.1"/>
    <property type="molecule type" value="Genomic_DNA"/>
</dbReference>
<dbReference type="EMBL" id="CP002685">
    <property type="protein sequence ID" value="ANM62251.1"/>
    <property type="molecule type" value="Genomic_DNA"/>
</dbReference>
<dbReference type="EMBL" id="BT000911">
    <property type="protein sequence ID" value="AAN41311.1"/>
    <property type="molecule type" value="mRNA"/>
</dbReference>
<dbReference type="EMBL" id="AK221727">
    <property type="protein sequence ID" value="BAD93733.1"/>
    <property type="molecule type" value="mRNA"/>
</dbReference>
<dbReference type="RefSeq" id="NP_001031361.2">
    <molecule id="Q8H111-2"/>
    <property type="nucleotide sequence ID" value="NM_001036284.3"/>
</dbReference>
<dbReference type="RefSeq" id="NP_001324424.1">
    <molecule id="Q8H111-1"/>
    <property type="nucleotide sequence ID" value="NM_001335542.1"/>
</dbReference>
<dbReference type="RefSeq" id="NP_179306.2">
    <molecule id="Q8H111-1"/>
    <property type="nucleotide sequence ID" value="NM_127269.3"/>
</dbReference>
<dbReference type="SMR" id="Q8H111"/>
<dbReference type="BioGRID" id="1577">
    <property type="interactions" value="8"/>
</dbReference>
<dbReference type="FunCoup" id="Q8H111">
    <property type="interactions" value="463"/>
</dbReference>
<dbReference type="IntAct" id="Q8H111">
    <property type="interactions" value="5"/>
</dbReference>
<dbReference type="STRING" id="3702.Q8H111"/>
<dbReference type="GlyGen" id="Q8H111">
    <property type="glycosylation" value="1 site"/>
</dbReference>
<dbReference type="iPTMnet" id="Q8H111"/>
<dbReference type="PaxDb" id="3702-AT2G17150.1"/>
<dbReference type="EnsemblPlants" id="AT2G17150.1">
    <molecule id="Q8H111-1"/>
    <property type="protein sequence ID" value="AT2G17150.1"/>
    <property type="gene ID" value="AT2G17150"/>
</dbReference>
<dbReference type="EnsemblPlants" id="AT2G17150.2">
    <molecule id="Q8H111-2"/>
    <property type="protein sequence ID" value="AT2G17150.2"/>
    <property type="gene ID" value="AT2G17150"/>
</dbReference>
<dbReference type="EnsemblPlants" id="AT2G17150.6">
    <molecule id="Q8H111-1"/>
    <property type="protein sequence ID" value="AT2G17150.6"/>
    <property type="gene ID" value="AT2G17150"/>
</dbReference>
<dbReference type="GeneID" id="816220"/>
<dbReference type="Gramene" id="AT2G17150.1">
    <molecule id="Q8H111-1"/>
    <property type="protein sequence ID" value="AT2G17150.1"/>
    <property type="gene ID" value="AT2G17150"/>
</dbReference>
<dbReference type="Gramene" id="AT2G17150.2">
    <molecule id="Q8H111-2"/>
    <property type="protein sequence ID" value="AT2G17150.2"/>
    <property type="gene ID" value="AT2G17150"/>
</dbReference>
<dbReference type="Gramene" id="AT2G17150.6">
    <molecule id="Q8H111-1"/>
    <property type="protein sequence ID" value="AT2G17150.6"/>
    <property type="gene ID" value="AT2G17150"/>
</dbReference>
<dbReference type="KEGG" id="ath:AT2G17150"/>
<dbReference type="Araport" id="AT2G17150"/>
<dbReference type="TAIR" id="AT2G17150">
    <property type="gene designation" value="NLP1"/>
</dbReference>
<dbReference type="eggNOG" id="ENOG502QQ6H">
    <property type="taxonomic scope" value="Eukaryota"/>
</dbReference>
<dbReference type="HOGENOM" id="CLU_008971_0_0_1"/>
<dbReference type="InParanoid" id="Q8H111"/>
<dbReference type="OMA" id="YESRTIR"/>
<dbReference type="PhylomeDB" id="Q8H111"/>
<dbReference type="PRO" id="PR:Q8H111"/>
<dbReference type="Proteomes" id="UP000006548">
    <property type="component" value="Chromosome 2"/>
</dbReference>
<dbReference type="ExpressionAtlas" id="Q8H111">
    <property type="expression patterns" value="baseline and differential"/>
</dbReference>
<dbReference type="GO" id="GO:0005634">
    <property type="term" value="C:nucleus"/>
    <property type="evidence" value="ECO:0007669"/>
    <property type="project" value="UniProtKB-SubCell"/>
</dbReference>
<dbReference type="GO" id="GO:0003677">
    <property type="term" value="F:DNA binding"/>
    <property type="evidence" value="ECO:0007669"/>
    <property type="project" value="UniProtKB-KW"/>
</dbReference>
<dbReference type="GO" id="GO:0003700">
    <property type="term" value="F:DNA-binding transcription factor activity"/>
    <property type="evidence" value="ECO:0000250"/>
    <property type="project" value="TAIR"/>
</dbReference>
<dbReference type="CDD" id="cd06407">
    <property type="entry name" value="PB1_NLP"/>
    <property type="match status" value="1"/>
</dbReference>
<dbReference type="FunFam" id="3.10.20.90:FF:000186">
    <property type="entry name" value="RWP-RK domain-containing protein"/>
    <property type="match status" value="1"/>
</dbReference>
<dbReference type="Gene3D" id="3.10.20.90">
    <property type="entry name" value="Phosphatidylinositol 3-kinase Catalytic Subunit, Chain A, domain 1"/>
    <property type="match status" value="1"/>
</dbReference>
<dbReference type="InterPro" id="IPR045012">
    <property type="entry name" value="NLP"/>
</dbReference>
<dbReference type="InterPro" id="IPR055081">
    <property type="entry name" value="NLP1-9_GAF"/>
</dbReference>
<dbReference type="InterPro" id="IPR053793">
    <property type="entry name" value="PB1-like"/>
</dbReference>
<dbReference type="InterPro" id="IPR000270">
    <property type="entry name" value="PB1_dom"/>
</dbReference>
<dbReference type="InterPro" id="IPR034891">
    <property type="entry name" value="PB1_NLP"/>
</dbReference>
<dbReference type="InterPro" id="IPR003035">
    <property type="entry name" value="RWP-RK_dom"/>
</dbReference>
<dbReference type="PANTHER" id="PTHR32002:SF39">
    <property type="entry name" value="PROTEIN NLP1"/>
    <property type="match status" value="1"/>
</dbReference>
<dbReference type="PANTHER" id="PTHR32002">
    <property type="entry name" value="PROTEIN NLP8"/>
    <property type="match status" value="1"/>
</dbReference>
<dbReference type="Pfam" id="PF22922">
    <property type="entry name" value="GAF_NLP"/>
    <property type="match status" value="2"/>
</dbReference>
<dbReference type="Pfam" id="PF00564">
    <property type="entry name" value="PB1"/>
    <property type="match status" value="1"/>
</dbReference>
<dbReference type="Pfam" id="PF02042">
    <property type="entry name" value="RWP-RK"/>
    <property type="match status" value="1"/>
</dbReference>
<dbReference type="SMART" id="SM00666">
    <property type="entry name" value="PB1"/>
    <property type="match status" value="1"/>
</dbReference>
<dbReference type="SUPFAM" id="SSF54277">
    <property type="entry name" value="CAD &amp; PB1 domains"/>
    <property type="match status" value="1"/>
</dbReference>
<dbReference type="PROSITE" id="PS51745">
    <property type="entry name" value="PB1"/>
    <property type="match status" value="1"/>
</dbReference>
<dbReference type="PROSITE" id="PS51519">
    <property type="entry name" value="RWP_RK"/>
    <property type="match status" value="1"/>
</dbReference>
<reference key="1">
    <citation type="journal article" date="1999" name="Nature">
        <title>Sequence and analysis of chromosome 2 of the plant Arabidopsis thaliana.</title>
        <authorList>
            <person name="Lin X."/>
            <person name="Kaul S."/>
            <person name="Rounsley S.D."/>
            <person name="Shea T.P."/>
            <person name="Benito M.-I."/>
            <person name="Town C.D."/>
            <person name="Fujii C.Y."/>
            <person name="Mason T.M."/>
            <person name="Bowman C.L."/>
            <person name="Barnstead M.E."/>
            <person name="Feldblyum T.V."/>
            <person name="Buell C.R."/>
            <person name="Ketchum K.A."/>
            <person name="Lee J.J."/>
            <person name="Ronning C.M."/>
            <person name="Koo H.L."/>
            <person name="Moffat K.S."/>
            <person name="Cronin L.A."/>
            <person name="Shen M."/>
            <person name="Pai G."/>
            <person name="Van Aken S."/>
            <person name="Umayam L."/>
            <person name="Tallon L.J."/>
            <person name="Gill J.E."/>
            <person name="Adams M.D."/>
            <person name="Carrera A.J."/>
            <person name="Creasy T.H."/>
            <person name="Goodman H.M."/>
            <person name="Somerville C.R."/>
            <person name="Copenhaver G.P."/>
            <person name="Preuss D."/>
            <person name="Nierman W.C."/>
            <person name="White O."/>
            <person name="Eisen J.A."/>
            <person name="Salzberg S.L."/>
            <person name="Fraser C.M."/>
            <person name="Venter J.C."/>
        </authorList>
    </citation>
    <scope>NUCLEOTIDE SEQUENCE [LARGE SCALE GENOMIC DNA]</scope>
    <source>
        <strain>cv. Columbia</strain>
    </source>
</reference>
<reference key="2">
    <citation type="journal article" date="2017" name="Plant J.">
        <title>Araport11: a complete reannotation of the Arabidopsis thaliana reference genome.</title>
        <authorList>
            <person name="Cheng C.Y."/>
            <person name="Krishnakumar V."/>
            <person name="Chan A.P."/>
            <person name="Thibaud-Nissen F."/>
            <person name="Schobel S."/>
            <person name="Town C.D."/>
        </authorList>
    </citation>
    <scope>GENOME REANNOTATION</scope>
    <source>
        <strain>cv. Columbia</strain>
    </source>
</reference>
<reference key="3">
    <citation type="journal article" date="2003" name="Science">
        <title>Empirical analysis of transcriptional activity in the Arabidopsis genome.</title>
        <authorList>
            <person name="Yamada K."/>
            <person name="Lim J."/>
            <person name="Dale J.M."/>
            <person name="Chen H."/>
            <person name="Shinn P."/>
            <person name="Palm C.J."/>
            <person name="Southwick A.M."/>
            <person name="Wu H.C."/>
            <person name="Kim C.J."/>
            <person name="Nguyen M."/>
            <person name="Pham P.K."/>
            <person name="Cheuk R.F."/>
            <person name="Karlin-Newmann G."/>
            <person name="Liu S.X."/>
            <person name="Lam B."/>
            <person name="Sakano H."/>
            <person name="Wu T."/>
            <person name="Yu G."/>
            <person name="Miranda M."/>
            <person name="Quach H.L."/>
            <person name="Tripp M."/>
            <person name="Chang C.H."/>
            <person name="Lee J.M."/>
            <person name="Toriumi M.J."/>
            <person name="Chan M.M."/>
            <person name="Tang C.C."/>
            <person name="Onodera C.S."/>
            <person name="Deng J.M."/>
            <person name="Akiyama K."/>
            <person name="Ansari Y."/>
            <person name="Arakawa T."/>
            <person name="Banh J."/>
            <person name="Banno F."/>
            <person name="Bowser L."/>
            <person name="Brooks S.Y."/>
            <person name="Carninci P."/>
            <person name="Chao Q."/>
            <person name="Choy N."/>
            <person name="Enju A."/>
            <person name="Goldsmith A.D."/>
            <person name="Gurjal M."/>
            <person name="Hansen N.F."/>
            <person name="Hayashizaki Y."/>
            <person name="Johnson-Hopson C."/>
            <person name="Hsuan V.W."/>
            <person name="Iida K."/>
            <person name="Karnes M."/>
            <person name="Khan S."/>
            <person name="Koesema E."/>
            <person name="Ishida J."/>
            <person name="Jiang P.X."/>
            <person name="Jones T."/>
            <person name="Kawai J."/>
            <person name="Kamiya A."/>
            <person name="Meyers C."/>
            <person name="Nakajima M."/>
            <person name="Narusaka M."/>
            <person name="Seki M."/>
            <person name="Sakurai T."/>
            <person name="Satou M."/>
            <person name="Tamse R."/>
            <person name="Vaysberg M."/>
            <person name="Wallender E.K."/>
            <person name="Wong C."/>
            <person name="Yamamura Y."/>
            <person name="Yuan S."/>
            <person name="Shinozaki K."/>
            <person name="Davis R.W."/>
            <person name="Theologis A."/>
            <person name="Ecker J.R."/>
        </authorList>
    </citation>
    <scope>NUCLEOTIDE SEQUENCE [LARGE SCALE MRNA] (ISOFORM 1)</scope>
    <source>
        <strain>cv. Columbia</strain>
    </source>
</reference>
<reference key="4">
    <citation type="submission" date="2005-03" db="EMBL/GenBank/DDBJ databases">
        <title>Large-scale analysis of RIKEN Arabidopsis full-length (RAFL) cDNAs.</title>
        <authorList>
            <person name="Totoki Y."/>
            <person name="Seki M."/>
            <person name="Ishida J."/>
            <person name="Nakajima M."/>
            <person name="Enju A."/>
            <person name="Kamiya A."/>
            <person name="Narusaka M."/>
            <person name="Shin-i T."/>
            <person name="Nakagawa M."/>
            <person name="Sakamoto N."/>
            <person name="Oishi K."/>
            <person name="Kohara Y."/>
            <person name="Kobayashi M."/>
            <person name="Toyoda A."/>
            <person name="Sakaki Y."/>
            <person name="Sakurai T."/>
            <person name="Iida K."/>
            <person name="Akiyama K."/>
            <person name="Satou M."/>
            <person name="Toyoda T."/>
            <person name="Konagaya A."/>
            <person name="Carninci P."/>
            <person name="Kawai J."/>
            <person name="Hayashizaki Y."/>
            <person name="Shinozaki K."/>
        </authorList>
    </citation>
    <scope>NUCLEOTIDE SEQUENCE [LARGE SCALE MRNA] (ISOFORM 2)</scope>
    <source>
        <strain>cv. Columbia</strain>
    </source>
</reference>
<reference key="5">
    <citation type="journal article" date="2005" name="J. Mol. Evol.">
        <title>Evolution of NIN-like proteins in Arabidopsis, rice, and Lotus japonicus.</title>
        <authorList>
            <person name="Schauser L."/>
            <person name="Wieloch W."/>
            <person name="Stougaard J."/>
        </authorList>
    </citation>
    <scope>GENE FAMILY</scope>
    <scope>NOMENCLATURE</scope>
</reference>
<protein>
    <recommendedName>
        <fullName>Protein NLP1</fullName>
        <shortName>AtNLP1</shortName>
    </recommendedName>
    <alternativeName>
        <fullName>NIN-like protein 1</fullName>
    </alternativeName>
    <alternativeName>
        <fullName>Nodule inception protein-like protein 1</fullName>
    </alternativeName>
</protein>
<feature type="chain" id="PRO_0000401486" description="Protein NLP1">
    <location>
        <begin position="1"/>
        <end position="909"/>
    </location>
</feature>
<feature type="domain" description="RWP-RK" evidence="2">
    <location>
        <begin position="595"/>
        <end position="676"/>
    </location>
</feature>
<feature type="domain" description="PB1" evidence="3">
    <location>
        <begin position="811"/>
        <end position="894"/>
    </location>
</feature>
<feature type="region of interest" description="Disordered" evidence="4">
    <location>
        <begin position="51"/>
        <end position="71"/>
    </location>
</feature>
<feature type="region of interest" description="Disordered" evidence="4">
    <location>
        <begin position="536"/>
        <end position="556"/>
    </location>
</feature>
<feature type="region of interest" description="Disordered" evidence="4">
    <location>
        <begin position="568"/>
        <end position="605"/>
    </location>
</feature>
<feature type="region of interest" description="Disordered" evidence="4">
    <location>
        <begin position="690"/>
        <end position="745"/>
    </location>
</feature>
<feature type="compositionally biased region" description="Polar residues" evidence="4">
    <location>
        <begin position="55"/>
        <end position="70"/>
    </location>
</feature>
<feature type="compositionally biased region" description="Polar residues" evidence="4">
    <location>
        <begin position="690"/>
        <end position="716"/>
    </location>
</feature>
<feature type="compositionally biased region" description="Low complexity" evidence="4">
    <location>
        <begin position="725"/>
        <end position="745"/>
    </location>
</feature>
<feature type="splice variant" id="VSP_040192" description="In isoform 2." evidence="5">
    <original>EFLQ</original>
    <variation>E</variation>
    <location>
        <begin position="294"/>
        <end position="297"/>
    </location>
</feature>
<feature type="splice variant" id="VSP_040193" description="In isoform 2." evidence="5">
    <original>VCPTTLKRICRQHGIMRWPSRKIKKVG</original>
    <variation>GKRMLYTAGDIAPFFMNFDSYCFLGKA</variation>
    <location>
        <begin position="631"/>
        <end position="657"/>
    </location>
</feature>
<feature type="splice variant" id="VSP_040194" description="In isoform 2." evidence="5">
    <location>
        <begin position="658"/>
        <end position="909"/>
    </location>
</feature>
<gene>
    <name type="primary">NLP1</name>
    <name type="ordered locus">At2g17150</name>
    <name type="ORF">F6P23.15</name>
    <name type="ORF">T23A1</name>
</gene>
<organism>
    <name type="scientific">Arabidopsis thaliana</name>
    <name type="common">Mouse-ear cress</name>
    <dbReference type="NCBI Taxonomy" id="3702"/>
    <lineage>
        <taxon>Eukaryota</taxon>
        <taxon>Viridiplantae</taxon>
        <taxon>Streptophyta</taxon>
        <taxon>Embryophyta</taxon>
        <taxon>Tracheophyta</taxon>
        <taxon>Spermatophyta</taxon>
        <taxon>Magnoliopsida</taxon>
        <taxon>eudicotyledons</taxon>
        <taxon>Gunneridae</taxon>
        <taxon>Pentapetalae</taxon>
        <taxon>rosids</taxon>
        <taxon>malvids</taxon>
        <taxon>Brassicales</taxon>
        <taxon>Brassicaceae</taxon>
        <taxon>Camelineae</taxon>
        <taxon>Arabidopsis</taxon>
    </lineage>
</organism>
<evidence type="ECO:0000250" key="1"/>
<evidence type="ECO:0000255" key="2">
    <source>
        <dbReference type="PROSITE-ProRule" id="PRU00852"/>
    </source>
</evidence>
<evidence type="ECO:0000255" key="3">
    <source>
        <dbReference type="PROSITE-ProRule" id="PRU01081"/>
    </source>
</evidence>
<evidence type="ECO:0000256" key="4">
    <source>
        <dbReference type="SAM" id="MobiDB-lite"/>
    </source>
</evidence>
<evidence type="ECO:0000303" key="5">
    <source ref="4"/>
</evidence>
<keyword id="KW-0025">Alternative splicing</keyword>
<keyword id="KW-0238">DNA-binding</keyword>
<keyword id="KW-0539">Nucleus</keyword>
<keyword id="KW-1185">Reference proteome</keyword>
<keyword id="KW-0804">Transcription</keyword>
<keyword id="KW-0805">Transcription regulation</keyword>
<sequence length="909" mass="100886">MEDDGGSDGGEGNGGFSPNSSFGAFADTAMDLDFMDELLFDGCWLETTDSKSLKQTEQSPSASTAMNDNSPFLCFGENPSQDNFSNEETERMFPQAEKFLLEEAEVGKSWWIAPSASEGPSSSVKERLLQAISGLNEAVQDKDFLVQIWVPIQQEGKSFLTTWAQPHLFNQEYSSLAEYRHVSETYNFPADEGMKDFVGLPGRVFLQKFPEWTPDVRFFRRDEYPRIKEAQKCDVRGSLALPVFERGSGTCLGVVEIVTTTQKMNYRQELEKMCKALEAVDLRSSSNLNTPSSEFLQVYSDFYCAALPEIKDFLATICRSYDFPLALSWAPCARQGKVGSRHSDENFSECVSTIDSACSVPDEQSKSFWEACSEHHLLQGEGIVGKAFEATKLFFVPEVATFSKTNYPLAHHAKISGLHAALAVPLKSKSGLVEFVLEFFFPKACLDTEAQQEMLKSLCVTLQQDFRSSNLFIKDLELEVVLPVRETMLFSENLLCGAETVESLTEIQMQESSWIAHMIKANEKGKDVSLSWEYQKEDPKELSSGRENSQLDPVPNNVPLEAEQLQQASTPGLRVDIGPSTESASTGGGNMLSSRRPGEKKRAKTEKTIGLEVLRQYFAGSLKDAAKSIGVCPTTLKRICRQHGIMRWPSRKIKKVGHSLKKLQLVMDSVQGAQGSIQLDSFYTSFPELNSPNMSSNGPSLKSNEQPSHLNAQTDNGIMAEENPRSPSSSCSKSSGSSNNNENTGNILVAEDADAVLKRAHSEAQLHNVNQEETKCLARTQSHKTFKEPLVLDNSSPLTGSSNTSLRARGAIKVKATFGEARIRFTLLPSWGFAELKQEIARRFNIDDISWFDLKYLDDDKEWVLLTCEADLVECIDIYRLTQTHTIKISLNEASQVKLSGSFGNTGLS</sequence>
<accession>Q8H111</accession>
<accession>Q56XE7</accession>
<name>NLP1_ARATH</name>
<comment type="function">
    <text evidence="1">Probable transcription factor.</text>
</comment>
<comment type="subcellular location">
    <subcellularLocation>
        <location evidence="2">Nucleus</location>
    </subcellularLocation>
</comment>
<comment type="alternative products">
    <event type="alternative splicing"/>
    <isoform>
        <id>Q8H111-1</id>
        <name>1</name>
        <sequence type="displayed"/>
    </isoform>
    <isoform>
        <id>Q8H111-2</id>
        <name>2</name>
        <sequence type="described" ref="VSP_040192 VSP_040193 VSP_040194"/>
    </isoform>
</comment>
<proteinExistence type="evidence at transcript level"/>